<protein>
    <recommendedName>
        <fullName>Probable RuBisCO transcriptional regulator</fullName>
    </recommendedName>
</protein>
<reference key="1">
    <citation type="journal article" date="2004" name="J. Mol. Evol.">
        <title>Comparative analysis of the complete plastid genome sequence of the red alga Gracilaria tenuistipitata var. liui provides insights into the evolution of rhodoplasts and their relationship to other plastids.</title>
        <authorList>
            <person name="Hagopian J.C."/>
            <person name="Reis M."/>
            <person name="Kitajima J.P."/>
            <person name="Bhattacharya D."/>
            <person name="de Oliveira M.C."/>
        </authorList>
    </citation>
    <scope>NUCLEOTIDE SEQUENCE [LARGE SCALE GENOMIC DNA]</scope>
</reference>
<organism>
    <name type="scientific">Gracilaria tenuistipitata var. liui</name>
    <name type="common">Red alga</name>
    <dbReference type="NCBI Taxonomy" id="285951"/>
    <lineage>
        <taxon>Eukaryota</taxon>
        <taxon>Rhodophyta</taxon>
        <taxon>Florideophyceae</taxon>
        <taxon>Rhodymeniophycidae</taxon>
        <taxon>Gracilariales</taxon>
        <taxon>Gracilariaceae</taxon>
        <taxon>Gracilaria</taxon>
        <taxon>Gracilaria tenuistipitata</taxon>
    </lineage>
</organism>
<gene>
    <name type="primary">rbcR</name>
    <name type="synonym">ycf30</name>
    <name type="ordered locus">Grc000017</name>
</gene>
<sequence>MRDLPFTLDQLRILKAIVKEGSFKRAADSLYVSQPAISLQIQNLEKQLNIPLFERSNKKATLTEAGNLLLRYGGRILALCEETCRALEDVQNLQGGNLVIGASQTTGTYLMPRLIGLFRQRYPQVNVQLQVHSTRLISWSVANGQVDLAVIGGEVPNELKDTLQVTSYAEDELALILPTSHVFSKLPDIQKEDLYRLRFIALDTQSTIRKVIDKILIQHDIDSSRFKIEMELNSIEAIKNAVQSGLGAAFVSVSAIAKELELGILHWAKIENVTIKRMLSIIINPNRYKSKAAETFSKEILTLFVTPAA</sequence>
<keyword id="KW-0150">Chloroplast</keyword>
<keyword id="KW-0238">DNA-binding</keyword>
<keyword id="KW-0934">Plastid</keyword>
<keyword id="KW-0804">Transcription</keyword>
<keyword id="KW-0805">Transcription regulation</keyword>
<proteinExistence type="inferred from homology"/>
<accession>Q6B936</accession>
<dbReference type="EMBL" id="AY673996">
    <property type="protein sequence ID" value="AAT79599.1"/>
    <property type="molecule type" value="Genomic_DNA"/>
</dbReference>
<dbReference type="RefSeq" id="YP_063524.1">
    <property type="nucleotide sequence ID" value="NC_006137.1"/>
</dbReference>
<dbReference type="SMR" id="Q6B936"/>
<dbReference type="GeneID" id="2943986"/>
<dbReference type="GO" id="GO:0009507">
    <property type="term" value="C:chloroplast"/>
    <property type="evidence" value="ECO:0007669"/>
    <property type="project" value="UniProtKB-SubCell"/>
</dbReference>
<dbReference type="GO" id="GO:0003700">
    <property type="term" value="F:DNA-binding transcription factor activity"/>
    <property type="evidence" value="ECO:0007669"/>
    <property type="project" value="InterPro"/>
</dbReference>
<dbReference type="GO" id="GO:0000976">
    <property type="term" value="F:transcription cis-regulatory region binding"/>
    <property type="evidence" value="ECO:0007669"/>
    <property type="project" value="TreeGrafter"/>
</dbReference>
<dbReference type="CDD" id="cd08420">
    <property type="entry name" value="PBP2_CysL_like"/>
    <property type="match status" value="1"/>
</dbReference>
<dbReference type="FunFam" id="1.10.10.10:FF:000001">
    <property type="entry name" value="LysR family transcriptional regulator"/>
    <property type="match status" value="1"/>
</dbReference>
<dbReference type="Gene3D" id="3.40.190.290">
    <property type="match status" value="1"/>
</dbReference>
<dbReference type="Gene3D" id="1.10.10.10">
    <property type="entry name" value="Winged helix-like DNA-binding domain superfamily/Winged helix DNA-binding domain"/>
    <property type="match status" value="1"/>
</dbReference>
<dbReference type="InterPro" id="IPR005119">
    <property type="entry name" value="LysR_subst-bd"/>
</dbReference>
<dbReference type="InterPro" id="IPR000847">
    <property type="entry name" value="Tscrpt_reg_HTH_LysR"/>
</dbReference>
<dbReference type="InterPro" id="IPR036388">
    <property type="entry name" value="WH-like_DNA-bd_sf"/>
</dbReference>
<dbReference type="InterPro" id="IPR036390">
    <property type="entry name" value="WH_DNA-bd_sf"/>
</dbReference>
<dbReference type="PANTHER" id="PTHR30126">
    <property type="entry name" value="HTH-TYPE TRANSCRIPTIONAL REGULATOR"/>
    <property type="match status" value="1"/>
</dbReference>
<dbReference type="PANTHER" id="PTHR30126:SF39">
    <property type="entry name" value="HTH-TYPE TRANSCRIPTIONAL REGULATOR CYSL"/>
    <property type="match status" value="1"/>
</dbReference>
<dbReference type="Pfam" id="PF00126">
    <property type="entry name" value="HTH_1"/>
    <property type="match status" value="1"/>
</dbReference>
<dbReference type="Pfam" id="PF03466">
    <property type="entry name" value="LysR_substrate"/>
    <property type="match status" value="1"/>
</dbReference>
<dbReference type="PRINTS" id="PR00039">
    <property type="entry name" value="HTHLYSR"/>
</dbReference>
<dbReference type="SUPFAM" id="SSF53850">
    <property type="entry name" value="Periplasmic binding protein-like II"/>
    <property type="match status" value="1"/>
</dbReference>
<dbReference type="SUPFAM" id="SSF46785">
    <property type="entry name" value="Winged helix' DNA-binding domain"/>
    <property type="match status" value="1"/>
</dbReference>
<dbReference type="PROSITE" id="PS50931">
    <property type="entry name" value="HTH_LYSR"/>
    <property type="match status" value="1"/>
</dbReference>
<evidence type="ECO:0000250" key="1"/>
<evidence type="ECO:0000255" key="2">
    <source>
        <dbReference type="PROSITE-ProRule" id="PRU00253"/>
    </source>
</evidence>
<evidence type="ECO:0000305" key="3"/>
<comment type="function">
    <text evidence="1">Trans-acting transcriptional regulator of RuBisCO genes (rbcL and rbcS) expression.</text>
</comment>
<comment type="subcellular location">
    <subcellularLocation>
        <location>Plastid</location>
        <location>Chloroplast</location>
    </subcellularLocation>
</comment>
<comment type="similarity">
    <text evidence="3">Belongs to the LysR transcriptional regulatory family.</text>
</comment>
<name>RBCR_GRATL</name>
<feature type="chain" id="PRO_0000280077" description="Probable RuBisCO transcriptional regulator">
    <location>
        <begin position="1"/>
        <end position="309"/>
    </location>
</feature>
<feature type="domain" description="HTH lysR-type" evidence="2">
    <location>
        <begin position="6"/>
        <end position="63"/>
    </location>
</feature>
<feature type="DNA-binding region" description="H-T-H motif" evidence="2">
    <location>
        <begin position="23"/>
        <end position="42"/>
    </location>
</feature>
<geneLocation type="chloroplast"/>